<organism>
    <name type="scientific">Shewanella baltica (strain OS195)</name>
    <dbReference type="NCBI Taxonomy" id="399599"/>
    <lineage>
        <taxon>Bacteria</taxon>
        <taxon>Pseudomonadati</taxon>
        <taxon>Pseudomonadota</taxon>
        <taxon>Gammaproteobacteria</taxon>
        <taxon>Alteromonadales</taxon>
        <taxon>Shewanellaceae</taxon>
        <taxon>Shewanella</taxon>
    </lineage>
</organism>
<evidence type="ECO:0000255" key="1">
    <source>
        <dbReference type="HAMAP-Rule" id="MF_01576"/>
    </source>
</evidence>
<proteinExistence type="inferred from homology"/>
<keyword id="KW-0028">Amino-acid biosynthesis</keyword>
<keyword id="KW-0368">Histidine biosynthesis</keyword>
<keyword id="KW-0378">Hydrolase</keyword>
<keyword id="KW-0486">Methionine biosynthesis</keyword>
<keyword id="KW-0511">Multifunctional enzyme</keyword>
<keyword id="KW-0521">NADP</keyword>
<keyword id="KW-0554">One-carbon metabolism</keyword>
<keyword id="KW-0560">Oxidoreductase</keyword>
<keyword id="KW-0658">Purine biosynthesis</keyword>
<name>FOLD_SHEB9</name>
<feature type="chain" id="PRO_1000087917" description="Bifunctional protein FolD">
    <location>
        <begin position="1"/>
        <end position="284"/>
    </location>
</feature>
<feature type="binding site" evidence="1">
    <location>
        <begin position="166"/>
        <end position="168"/>
    </location>
    <ligand>
        <name>NADP(+)</name>
        <dbReference type="ChEBI" id="CHEBI:58349"/>
    </ligand>
</feature>
<feature type="binding site" evidence="1">
    <location>
        <position position="232"/>
    </location>
    <ligand>
        <name>NADP(+)</name>
        <dbReference type="ChEBI" id="CHEBI:58349"/>
    </ligand>
</feature>
<gene>
    <name evidence="1" type="primary">folD</name>
    <name type="ordered locus">Sbal195_1625</name>
</gene>
<reference key="1">
    <citation type="submission" date="2007-11" db="EMBL/GenBank/DDBJ databases">
        <title>Complete sequence of chromosome of Shewanella baltica OS195.</title>
        <authorList>
            <consortium name="US DOE Joint Genome Institute"/>
            <person name="Copeland A."/>
            <person name="Lucas S."/>
            <person name="Lapidus A."/>
            <person name="Barry K."/>
            <person name="Glavina del Rio T."/>
            <person name="Dalin E."/>
            <person name="Tice H."/>
            <person name="Pitluck S."/>
            <person name="Chain P."/>
            <person name="Malfatti S."/>
            <person name="Shin M."/>
            <person name="Vergez L."/>
            <person name="Schmutz J."/>
            <person name="Larimer F."/>
            <person name="Land M."/>
            <person name="Hauser L."/>
            <person name="Kyrpides N."/>
            <person name="Kim E."/>
            <person name="Brettar I."/>
            <person name="Rodrigues J."/>
            <person name="Konstantinidis K."/>
            <person name="Klappenbach J."/>
            <person name="Hofle M."/>
            <person name="Tiedje J."/>
            <person name="Richardson P."/>
        </authorList>
    </citation>
    <scope>NUCLEOTIDE SEQUENCE [LARGE SCALE GENOMIC DNA]</scope>
    <source>
        <strain>OS195</strain>
    </source>
</reference>
<protein>
    <recommendedName>
        <fullName evidence="1">Bifunctional protein FolD</fullName>
    </recommendedName>
    <domain>
        <recommendedName>
            <fullName evidence="1">Methylenetetrahydrofolate dehydrogenase</fullName>
            <ecNumber evidence="1">1.5.1.5</ecNumber>
        </recommendedName>
    </domain>
    <domain>
        <recommendedName>
            <fullName evidence="1">Methenyltetrahydrofolate cyclohydrolase</fullName>
            <ecNumber evidence="1">3.5.4.9</ecNumber>
        </recommendedName>
    </domain>
</protein>
<comment type="function">
    <text evidence="1">Catalyzes the oxidation of 5,10-methylenetetrahydrofolate to 5,10-methenyltetrahydrofolate and then the hydrolysis of 5,10-methenyltetrahydrofolate to 10-formyltetrahydrofolate.</text>
</comment>
<comment type="catalytic activity">
    <reaction evidence="1">
        <text>(6R)-5,10-methylene-5,6,7,8-tetrahydrofolate + NADP(+) = (6R)-5,10-methenyltetrahydrofolate + NADPH</text>
        <dbReference type="Rhea" id="RHEA:22812"/>
        <dbReference type="ChEBI" id="CHEBI:15636"/>
        <dbReference type="ChEBI" id="CHEBI:57455"/>
        <dbReference type="ChEBI" id="CHEBI:57783"/>
        <dbReference type="ChEBI" id="CHEBI:58349"/>
        <dbReference type="EC" id="1.5.1.5"/>
    </reaction>
</comment>
<comment type="catalytic activity">
    <reaction evidence="1">
        <text>(6R)-5,10-methenyltetrahydrofolate + H2O = (6R)-10-formyltetrahydrofolate + H(+)</text>
        <dbReference type="Rhea" id="RHEA:23700"/>
        <dbReference type="ChEBI" id="CHEBI:15377"/>
        <dbReference type="ChEBI" id="CHEBI:15378"/>
        <dbReference type="ChEBI" id="CHEBI:57455"/>
        <dbReference type="ChEBI" id="CHEBI:195366"/>
        <dbReference type="EC" id="3.5.4.9"/>
    </reaction>
</comment>
<comment type="pathway">
    <text evidence="1">One-carbon metabolism; tetrahydrofolate interconversion.</text>
</comment>
<comment type="subunit">
    <text evidence="1">Homodimer.</text>
</comment>
<comment type="similarity">
    <text evidence="1">Belongs to the tetrahydrofolate dehydrogenase/cyclohydrolase family.</text>
</comment>
<sequence>MTAQIIDGKAIAQSIRTKLSEKVTARKEAGQRIPGLAVVLVGADPASQVYVGSKRKACEEVGFISRSYDLETSCSEDELLSLIDSLNEDPTIDGILVQLPLPAHIEDSKVIERIRPDKDVDGFHPYNVGRLAQRIPVLRSCTPMGIMTLIKSTGVDTYGLDAVVVGASNIVGRPMTLELLLAGCTTTTCHRFTKNLEQKIRIADLVVVAVGKPGFIPGEWIKPGAIVIDVGINRLDNGTLVGDVQYDVAAQNASFITPVPGGVGPMTIASLLENTLYAAEQYHD</sequence>
<accession>A9KWH5</accession>
<dbReference type="EC" id="1.5.1.5" evidence="1"/>
<dbReference type="EC" id="3.5.4.9" evidence="1"/>
<dbReference type="EMBL" id="CP000891">
    <property type="protein sequence ID" value="ABX48798.1"/>
    <property type="molecule type" value="Genomic_DNA"/>
</dbReference>
<dbReference type="RefSeq" id="WP_006085364.1">
    <property type="nucleotide sequence ID" value="NC_009997.1"/>
</dbReference>
<dbReference type="SMR" id="A9KWH5"/>
<dbReference type="GeneID" id="11771858"/>
<dbReference type="KEGG" id="sbn:Sbal195_1625"/>
<dbReference type="HOGENOM" id="CLU_034045_2_1_6"/>
<dbReference type="UniPathway" id="UPA00193"/>
<dbReference type="Proteomes" id="UP000000770">
    <property type="component" value="Chromosome"/>
</dbReference>
<dbReference type="GO" id="GO:0005829">
    <property type="term" value="C:cytosol"/>
    <property type="evidence" value="ECO:0007669"/>
    <property type="project" value="TreeGrafter"/>
</dbReference>
<dbReference type="GO" id="GO:0004477">
    <property type="term" value="F:methenyltetrahydrofolate cyclohydrolase activity"/>
    <property type="evidence" value="ECO:0007669"/>
    <property type="project" value="UniProtKB-UniRule"/>
</dbReference>
<dbReference type="GO" id="GO:0004488">
    <property type="term" value="F:methylenetetrahydrofolate dehydrogenase (NADP+) activity"/>
    <property type="evidence" value="ECO:0007669"/>
    <property type="project" value="UniProtKB-UniRule"/>
</dbReference>
<dbReference type="GO" id="GO:0000105">
    <property type="term" value="P:L-histidine biosynthetic process"/>
    <property type="evidence" value="ECO:0007669"/>
    <property type="project" value="UniProtKB-KW"/>
</dbReference>
<dbReference type="GO" id="GO:0009086">
    <property type="term" value="P:methionine biosynthetic process"/>
    <property type="evidence" value="ECO:0007669"/>
    <property type="project" value="UniProtKB-KW"/>
</dbReference>
<dbReference type="GO" id="GO:0006164">
    <property type="term" value="P:purine nucleotide biosynthetic process"/>
    <property type="evidence" value="ECO:0007669"/>
    <property type="project" value="UniProtKB-KW"/>
</dbReference>
<dbReference type="GO" id="GO:0035999">
    <property type="term" value="P:tetrahydrofolate interconversion"/>
    <property type="evidence" value="ECO:0007669"/>
    <property type="project" value="UniProtKB-UniRule"/>
</dbReference>
<dbReference type="CDD" id="cd01080">
    <property type="entry name" value="NAD_bind_m-THF_DH_Cyclohyd"/>
    <property type="match status" value="1"/>
</dbReference>
<dbReference type="FunFam" id="3.40.50.10860:FF:000001">
    <property type="entry name" value="Bifunctional protein FolD"/>
    <property type="match status" value="1"/>
</dbReference>
<dbReference type="FunFam" id="3.40.50.720:FF:000006">
    <property type="entry name" value="Bifunctional protein FolD"/>
    <property type="match status" value="1"/>
</dbReference>
<dbReference type="Gene3D" id="3.40.50.10860">
    <property type="entry name" value="Leucine Dehydrogenase, chain A, domain 1"/>
    <property type="match status" value="1"/>
</dbReference>
<dbReference type="Gene3D" id="3.40.50.720">
    <property type="entry name" value="NAD(P)-binding Rossmann-like Domain"/>
    <property type="match status" value="1"/>
</dbReference>
<dbReference type="HAMAP" id="MF_01576">
    <property type="entry name" value="THF_DHG_CYH"/>
    <property type="match status" value="1"/>
</dbReference>
<dbReference type="InterPro" id="IPR046346">
    <property type="entry name" value="Aminoacid_DH-like_N_sf"/>
</dbReference>
<dbReference type="InterPro" id="IPR036291">
    <property type="entry name" value="NAD(P)-bd_dom_sf"/>
</dbReference>
<dbReference type="InterPro" id="IPR000672">
    <property type="entry name" value="THF_DH/CycHdrlase"/>
</dbReference>
<dbReference type="InterPro" id="IPR020630">
    <property type="entry name" value="THF_DH/CycHdrlase_cat_dom"/>
</dbReference>
<dbReference type="InterPro" id="IPR020867">
    <property type="entry name" value="THF_DH/CycHdrlase_CS"/>
</dbReference>
<dbReference type="InterPro" id="IPR020631">
    <property type="entry name" value="THF_DH/CycHdrlase_NAD-bd_dom"/>
</dbReference>
<dbReference type="NCBIfam" id="NF008058">
    <property type="entry name" value="PRK10792.1"/>
    <property type="match status" value="1"/>
</dbReference>
<dbReference type="PANTHER" id="PTHR48099:SF5">
    <property type="entry name" value="C-1-TETRAHYDROFOLATE SYNTHASE, CYTOPLASMIC"/>
    <property type="match status" value="1"/>
</dbReference>
<dbReference type="PANTHER" id="PTHR48099">
    <property type="entry name" value="C-1-TETRAHYDROFOLATE SYNTHASE, CYTOPLASMIC-RELATED"/>
    <property type="match status" value="1"/>
</dbReference>
<dbReference type="Pfam" id="PF00763">
    <property type="entry name" value="THF_DHG_CYH"/>
    <property type="match status" value="1"/>
</dbReference>
<dbReference type="Pfam" id="PF02882">
    <property type="entry name" value="THF_DHG_CYH_C"/>
    <property type="match status" value="1"/>
</dbReference>
<dbReference type="PRINTS" id="PR00085">
    <property type="entry name" value="THFDHDRGNASE"/>
</dbReference>
<dbReference type="SUPFAM" id="SSF53223">
    <property type="entry name" value="Aminoacid dehydrogenase-like, N-terminal domain"/>
    <property type="match status" value="1"/>
</dbReference>
<dbReference type="SUPFAM" id="SSF51735">
    <property type="entry name" value="NAD(P)-binding Rossmann-fold domains"/>
    <property type="match status" value="1"/>
</dbReference>
<dbReference type="PROSITE" id="PS00766">
    <property type="entry name" value="THF_DHG_CYH_1"/>
    <property type="match status" value="1"/>
</dbReference>
<dbReference type="PROSITE" id="PS00767">
    <property type="entry name" value="THF_DHG_CYH_2"/>
    <property type="match status" value="1"/>
</dbReference>